<dbReference type="EMBL" id="CP000139">
    <property type="protein sequence ID" value="ABR38490.1"/>
    <property type="molecule type" value="Genomic_DNA"/>
</dbReference>
<dbReference type="RefSeq" id="WP_005844889.1">
    <property type="nucleotide sequence ID" value="NZ_JANSWM010000035.1"/>
</dbReference>
<dbReference type="SMR" id="A6KYH6"/>
<dbReference type="STRING" id="435590.BVU_0786"/>
<dbReference type="PaxDb" id="435590-BVU_0786"/>
<dbReference type="GeneID" id="93449004"/>
<dbReference type="KEGG" id="bvu:BVU_0786"/>
<dbReference type="eggNOG" id="COG0200">
    <property type="taxonomic scope" value="Bacteria"/>
</dbReference>
<dbReference type="HOGENOM" id="CLU_055188_4_2_10"/>
<dbReference type="BioCyc" id="BVUL435590:G1G59-828-MONOMER"/>
<dbReference type="Proteomes" id="UP000002861">
    <property type="component" value="Chromosome"/>
</dbReference>
<dbReference type="GO" id="GO:0022625">
    <property type="term" value="C:cytosolic large ribosomal subunit"/>
    <property type="evidence" value="ECO:0007669"/>
    <property type="project" value="TreeGrafter"/>
</dbReference>
<dbReference type="GO" id="GO:0019843">
    <property type="term" value="F:rRNA binding"/>
    <property type="evidence" value="ECO:0007669"/>
    <property type="project" value="UniProtKB-UniRule"/>
</dbReference>
<dbReference type="GO" id="GO:0003735">
    <property type="term" value="F:structural constituent of ribosome"/>
    <property type="evidence" value="ECO:0007669"/>
    <property type="project" value="InterPro"/>
</dbReference>
<dbReference type="GO" id="GO:0006412">
    <property type="term" value="P:translation"/>
    <property type="evidence" value="ECO:0007669"/>
    <property type="project" value="UniProtKB-UniRule"/>
</dbReference>
<dbReference type="Gene3D" id="3.100.10.10">
    <property type="match status" value="1"/>
</dbReference>
<dbReference type="HAMAP" id="MF_01341">
    <property type="entry name" value="Ribosomal_uL15"/>
    <property type="match status" value="1"/>
</dbReference>
<dbReference type="InterPro" id="IPR030878">
    <property type="entry name" value="Ribosomal_uL15"/>
</dbReference>
<dbReference type="InterPro" id="IPR021131">
    <property type="entry name" value="Ribosomal_uL15/eL18"/>
</dbReference>
<dbReference type="InterPro" id="IPR036227">
    <property type="entry name" value="Ribosomal_uL15/eL18_sf"/>
</dbReference>
<dbReference type="InterPro" id="IPR005749">
    <property type="entry name" value="Ribosomal_uL15_bac-type"/>
</dbReference>
<dbReference type="InterPro" id="IPR001196">
    <property type="entry name" value="Ribosomal_uL15_CS"/>
</dbReference>
<dbReference type="NCBIfam" id="TIGR01071">
    <property type="entry name" value="rplO_bact"/>
    <property type="match status" value="1"/>
</dbReference>
<dbReference type="PANTHER" id="PTHR12934">
    <property type="entry name" value="50S RIBOSOMAL PROTEIN L15"/>
    <property type="match status" value="1"/>
</dbReference>
<dbReference type="PANTHER" id="PTHR12934:SF11">
    <property type="entry name" value="LARGE RIBOSOMAL SUBUNIT PROTEIN UL15M"/>
    <property type="match status" value="1"/>
</dbReference>
<dbReference type="Pfam" id="PF00828">
    <property type="entry name" value="Ribosomal_L27A"/>
    <property type="match status" value="1"/>
</dbReference>
<dbReference type="SUPFAM" id="SSF52080">
    <property type="entry name" value="Ribosomal proteins L15p and L18e"/>
    <property type="match status" value="1"/>
</dbReference>
<dbReference type="PROSITE" id="PS00475">
    <property type="entry name" value="RIBOSOMAL_L15"/>
    <property type="match status" value="1"/>
</dbReference>
<gene>
    <name evidence="1" type="primary">rplO</name>
    <name type="ordered locus">BVU_0786</name>
</gene>
<accession>A6KYH6</accession>
<proteinExistence type="inferred from homology"/>
<keyword id="KW-0687">Ribonucleoprotein</keyword>
<keyword id="KW-0689">Ribosomal protein</keyword>
<keyword id="KW-0694">RNA-binding</keyword>
<keyword id="KW-0699">rRNA-binding</keyword>
<feature type="chain" id="PRO_1000054427" description="Large ribosomal subunit protein uL15">
    <location>
        <begin position="1"/>
        <end position="148"/>
    </location>
</feature>
<feature type="region of interest" description="Disordered" evidence="2">
    <location>
        <begin position="1"/>
        <end position="51"/>
    </location>
</feature>
<feature type="compositionally biased region" description="Gly residues" evidence="2">
    <location>
        <begin position="21"/>
        <end position="31"/>
    </location>
</feature>
<sequence length="148" mass="15680">MNLSNLKPAEGSTKTRKRIGRGPGSGLGGTSTRGHKGAKSRSGYSKKIGFEGGQMPLQRRVPKFGFKNINRVEYKAINLETIQKLAEAKNLTKVGMNDFIEAGFISSNQLVKVLGNGSLTTKLDVEANAFSKSAVAAIEAVGGNAVKL</sequence>
<name>RL15_PHOV8</name>
<evidence type="ECO:0000255" key="1">
    <source>
        <dbReference type="HAMAP-Rule" id="MF_01341"/>
    </source>
</evidence>
<evidence type="ECO:0000256" key="2">
    <source>
        <dbReference type="SAM" id="MobiDB-lite"/>
    </source>
</evidence>
<evidence type="ECO:0000305" key="3"/>
<comment type="function">
    <text evidence="1">Binds to the 23S rRNA.</text>
</comment>
<comment type="subunit">
    <text evidence="1">Part of the 50S ribosomal subunit.</text>
</comment>
<comment type="similarity">
    <text evidence="1">Belongs to the universal ribosomal protein uL15 family.</text>
</comment>
<reference key="1">
    <citation type="journal article" date="2007" name="PLoS Biol.">
        <title>Evolution of symbiotic bacteria in the distal human intestine.</title>
        <authorList>
            <person name="Xu J."/>
            <person name="Mahowald M.A."/>
            <person name="Ley R.E."/>
            <person name="Lozupone C.A."/>
            <person name="Hamady M."/>
            <person name="Martens E.C."/>
            <person name="Henrissat B."/>
            <person name="Coutinho P.M."/>
            <person name="Minx P."/>
            <person name="Latreille P."/>
            <person name="Cordum H."/>
            <person name="Van Brunt A."/>
            <person name="Kim K."/>
            <person name="Fulton R.S."/>
            <person name="Fulton L.A."/>
            <person name="Clifton S.W."/>
            <person name="Wilson R.K."/>
            <person name="Knight R.D."/>
            <person name="Gordon J.I."/>
        </authorList>
    </citation>
    <scope>NUCLEOTIDE SEQUENCE [LARGE SCALE GENOMIC DNA]</scope>
    <source>
        <strain>ATCC 8482 / DSM 1447 / JCM 5826 / CCUG 4940 / NBRC 14291 / NCTC 11154</strain>
    </source>
</reference>
<protein>
    <recommendedName>
        <fullName evidence="1">Large ribosomal subunit protein uL15</fullName>
    </recommendedName>
    <alternativeName>
        <fullName evidence="3">50S ribosomal protein L15</fullName>
    </alternativeName>
</protein>
<organism>
    <name type="scientific">Phocaeicola vulgatus (strain ATCC 8482 / DSM 1447 / JCM 5826 / CCUG 4940 / NBRC 14291 / NCTC 11154)</name>
    <name type="common">Bacteroides vulgatus</name>
    <dbReference type="NCBI Taxonomy" id="435590"/>
    <lineage>
        <taxon>Bacteria</taxon>
        <taxon>Pseudomonadati</taxon>
        <taxon>Bacteroidota</taxon>
        <taxon>Bacteroidia</taxon>
        <taxon>Bacteroidales</taxon>
        <taxon>Bacteroidaceae</taxon>
        <taxon>Phocaeicola</taxon>
    </lineage>
</organism>